<keyword id="KW-0002">3D-structure</keyword>
<keyword id="KW-0004">4Fe-4S</keyword>
<keyword id="KW-0148">Chlorophyll</keyword>
<keyword id="KW-0157">Chromophore</keyword>
<keyword id="KW-0249">Electron transport</keyword>
<keyword id="KW-0408">Iron</keyword>
<keyword id="KW-0411">Iron-sulfur</keyword>
<keyword id="KW-0460">Magnesium</keyword>
<keyword id="KW-0472">Membrane</keyword>
<keyword id="KW-0479">Metal-binding</keyword>
<keyword id="KW-0560">Oxidoreductase</keyword>
<keyword id="KW-0602">Photosynthesis</keyword>
<keyword id="KW-0603">Photosystem I</keyword>
<keyword id="KW-1185">Reference proteome</keyword>
<keyword id="KW-0793">Thylakoid</keyword>
<keyword id="KW-0812">Transmembrane</keyword>
<keyword id="KW-1133">Transmembrane helix</keyword>
<keyword id="KW-0813">Transport</keyword>
<feature type="chain" id="PRO_0000294211" description="Photosystem I P700 chlorophyll a apoprotein A1">
    <location>
        <begin position="1"/>
        <end position="763"/>
    </location>
</feature>
<feature type="transmembrane region" description="Helical; Name=I" evidence="1">
    <location>
        <begin position="72"/>
        <end position="95"/>
    </location>
</feature>
<feature type="transmembrane region" description="Helical; Name=II" evidence="1">
    <location>
        <begin position="158"/>
        <end position="181"/>
    </location>
</feature>
<feature type="transmembrane region" description="Helical; Name=III" evidence="1">
    <location>
        <begin position="197"/>
        <end position="221"/>
    </location>
</feature>
<feature type="transmembrane region" description="Helical; Name=IV" evidence="1">
    <location>
        <begin position="305"/>
        <end position="323"/>
    </location>
</feature>
<feature type="transmembrane region" description="Helical; Name=V" evidence="1">
    <location>
        <begin position="360"/>
        <end position="383"/>
    </location>
</feature>
<feature type="transmembrane region" description="Helical; Name=VI" evidence="1">
    <location>
        <begin position="399"/>
        <end position="425"/>
    </location>
</feature>
<feature type="transmembrane region" description="Helical; Name=VII" evidence="1">
    <location>
        <begin position="447"/>
        <end position="469"/>
    </location>
</feature>
<feature type="transmembrane region" description="Helical; Name=VIII" evidence="1">
    <location>
        <begin position="544"/>
        <end position="562"/>
    </location>
</feature>
<feature type="transmembrane region" description="Helical; Name=IX" evidence="1">
    <location>
        <begin position="602"/>
        <end position="623"/>
    </location>
</feature>
<feature type="transmembrane region" description="Helical; Name=X" evidence="1">
    <location>
        <begin position="677"/>
        <end position="699"/>
    </location>
</feature>
<feature type="transmembrane region" description="Helical; Name=XI" evidence="1">
    <location>
        <begin position="737"/>
        <end position="757"/>
    </location>
</feature>
<feature type="binding site" evidence="1">
    <location>
        <position position="586"/>
    </location>
    <ligand>
        <name>[4Fe-4S] cluster</name>
        <dbReference type="ChEBI" id="CHEBI:49883"/>
        <note>ligand shared between dimeric partners</note>
    </ligand>
</feature>
<feature type="binding site" evidence="1">
    <location>
        <position position="595"/>
    </location>
    <ligand>
        <name>[4Fe-4S] cluster</name>
        <dbReference type="ChEBI" id="CHEBI:49883"/>
        <note>ligand shared between dimeric partners</note>
    </ligand>
</feature>
<feature type="binding site" description="axial binding residue" evidence="1">
    <location>
        <position position="688"/>
    </location>
    <ligand>
        <name>chlorophyll a'</name>
        <dbReference type="ChEBI" id="CHEBI:189419"/>
        <label>A1</label>
    </ligand>
    <ligandPart>
        <name>Mg</name>
        <dbReference type="ChEBI" id="CHEBI:25107"/>
    </ligandPart>
</feature>
<feature type="binding site" description="axial binding residue" evidence="1">
    <location>
        <position position="696"/>
    </location>
    <ligand>
        <name>chlorophyll a</name>
        <dbReference type="ChEBI" id="CHEBI:58416"/>
        <label>A3</label>
    </ligand>
    <ligandPart>
        <name>Mg</name>
        <dbReference type="ChEBI" id="CHEBI:25107"/>
    </ligandPart>
</feature>
<feature type="binding site" evidence="1">
    <location>
        <position position="704"/>
    </location>
    <ligand>
        <name>chlorophyll a</name>
        <dbReference type="ChEBI" id="CHEBI:58416"/>
        <label>A3</label>
    </ligand>
</feature>
<feature type="binding site" evidence="1">
    <location>
        <position position="705"/>
    </location>
    <ligand>
        <name>phylloquinone</name>
        <dbReference type="ChEBI" id="CHEBI:18067"/>
        <label>A</label>
    </ligand>
</feature>
<evidence type="ECO:0000255" key="1">
    <source>
        <dbReference type="HAMAP-Rule" id="MF_00458"/>
    </source>
</evidence>
<dbReference type="EC" id="1.97.1.12" evidence="1"/>
<dbReference type="EMBL" id="CP000100">
    <property type="protein sequence ID" value="ABB58079.1"/>
    <property type="molecule type" value="Genomic_DNA"/>
</dbReference>
<dbReference type="RefSeq" id="WP_011244354.1">
    <property type="nucleotide sequence ID" value="NZ_JACJTX010000001.1"/>
</dbReference>
<dbReference type="PDB" id="6KIF">
    <property type="method" value="EM"/>
    <property type="resolution" value="3.30 A"/>
    <property type="chains" value="A/G/e=1-763"/>
</dbReference>
<dbReference type="PDB" id="6KIG">
    <property type="method" value="EM"/>
    <property type="resolution" value="2.90 A"/>
    <property type="chains" value="A/G/e=1-763"/>
</dbReference>
<dbReference type="PDBsum" id="6KIF"/>
<dbReference type="PDBsum" id="6KIG"/>
<dbReference type="EMDB" id="EMD-9994"/>
<dbReference type="EMDB" id="EMD-9995"/>
<dbReference type="SMR" id="Q31LJ0"/>
<dbReference type="STRING" id="1140.Synpcc7942_2049"/>
<dbReference type="PaxDb" id="1140-Synpcc7942_2049"/>
<dbReference type="GeneID" id="72430925"/>
<dbReference type="KEGG" id="syf:Synpcc7942_2049"/>
<dbReference type="eggNOG" id="COG2885">
    <property type="taxonomic scope" value="Bacteria"/>
</dbReference>
<dbReference type="HOGENOM" id="CLU_016126_1_0_3"/>
<dbReference type="OrthoDB" id="499313at2"/>
<dbReference type="BioCyc" id="MetaCyc:SYNPCC7942_2049-MONOMER"/>
<dbReference type="BioCyc" id="SYNEL:SYNPCC7942_2049-MONOMER"/>
<dbReference type="Proteomes" id="UP000889800">
    <property type="component" value="Chromosome"/>
</dbReference>
<dbReference type="GO" id="GO:0009522">
    <property type="term" value="C:photosystem I"/>
    <property type="evidence" value="ECO:0007669"/>
    <property type="project" value="UniProtKB-KW"/>
</dbReference>
<dbReference type="GO" id="GO:0031676">
    <property type="term" value="C:plasma membrane-derived thylakoid membrane"/>
    <property type="evidence" value="ECO:0007669"/>
    <property type="project" value="UniProtKB-SubCell"/>
</dbReference>
<dbReference type="GO" id="GO:0051539">
    <property type="term" value="F:4 iron, 4 sulfur cluster binding"/>
    <property type="evidence" value="ECO:0007669"/>
    <property type="project" value="UniProtKB-KW"/>
</dbReference>
<dbReference type="GO" id="GO:0016168">
    <property type="term" value="F:chlorophyll binding"/>
    <property type="evidence" value="ECO:0007669"/>
    <property type="project" value="UniProtKB-KW"/>
</dbReference>
<dbReference type="GO" id="GO:0009055">
    <property type="term" value="F:electron transfer activity"/>
    <property type="evidence" value="ECO:0007669"/>
    <property type="project" value="UniProtKB-UniRule"/>
</dbReference>
<dbReference type="GO" id="GO:0000287">
    <property type="term" value="F:magnesium ion binding"/>
    <property type="evidence" value="ECO:0007669"/>
    <property type="project" value="UniProtKB-UniRule"/>
</dbReference>
<dbReference type="GO" id="GO:0016491">
    <property type="term" value="F:oxidoreductase activity"/>
    <property type="evidence" value="ECO:0007669"/>
    <property type="project" value="UniProtKB-KW"/>
</dbReference>
<dbReference type="GO" id="GO:0015979">
    <property type="term" value="P:photosynthesis"/>
    <property type="evidence" value="ECO:0007669"/>
    <property type="project" value="UniProtKB-UniRule"/>
</dbReference>
<dbReference type="FunFam" id="1.20.1130.10:FF:000001">
    <property type="entry name" value="Photosystem I P700 chlorophyll a apoprotein A2"/>
    <property type="match status" value="1"/>
</dbReference>
<dbReference type="Gene3D" id="1.20.1130.10">
    <property type="entry name" value="Photosystem I PsaA/PsaB"/>
    <property type="match status" value="1"/>
</dbReference>
<dbReference type="HAMAP" id="MF_00458">
    <property type="entry name" value="PSI_PsaA"/>
    <property type="match status" value="1"/>
</dbReference>
<dbReference type="InterPro" id="IPR006243">
    <property type="entry name" value="PSI_PsaA"/>
</dbReference>
<dbReference type="InterPro" id="IPR001280">
    <property type="entry name" value="PSI_PsaA/B"/>
</dbReference>
<dbReference type="InterPro" id="IPR020586">
    <property type="entry name" value="PSI_PsaA/B_CS"/>
</dbReference>
<dbReference type="InterPro" id="IPR036408">
    <property type="entry name" value="PSI_PsaA/B_sf"/>
</dbReference>
<dbReference type="NCBIfam" id="TIGR01335">
    <property type="entry name" value="psaA"/>
    <property type="match status" value="1"/>
</dbReference>
<dbReference type="PANTHER" id="PTHR30128">
    <property type="entry name" value="OUTER MEMBRANE PROTEIN, OMPA-RELATED"/>
    <property type="match status" value="1"/>
</dbReference>
<dbReference type="PANTHER" id="PTHR30128:SF19">
    <property type="entry name" value="PHOTOSYSTEM I P700 CHLOROPHYLL A APOPROTEIN A1-RELATED"/>
    <property type="match status" value="1"/>
</dbReference>
<dbReference type="Pfam" id="PF00223">
    <property type="entry name" value="PsaA_PsaB"/>
    <property type="match status" value="1"/>
</dbReference>
<dbReference type="PIRSF" id="PIRSF002905">
    <property type="entry name" value="PSI_A"/>
    <property type="match status" value="1"/>
</dbReference>
<dbReference type="PRINTS" id="PR00257">
    <property type="entry name" value="PHOTSYSPSAAB"/>
</dbReference>
<dbReference type="SUPFAM" id="SSF81558">
    <property type="entry name" value="Photosystem I subunits PsaA/PsaB"/>
    <property type="match status" value="1"/>
</dbReference>
<dbReference type="PROSITE" id="PS00419">
    <property type="entry name" value="PHOTOSYSTEM_I_PSAAB"/>
    <property type="match status" value="1"/>
</dbReference>
<protein>
    <recommendedName>
        <fullName evidence="1">Photosystem I P700 chlorophyll a apoprotein A1</fullName>
        <ecNumber evidence="1">1.97.1.12</ecNumber>
    </recommendedName>
    <alternativeName>
        <fullName evidence="1">PsaA</fullName>
    </alternativeName>
</protein>
<proteinExistence type="evidence at protein level"/>
<sequence>MTISPPEREAKVKATVDKNPVPTSFEKWGKPGHFDRTLAKGPKTTTWIWNLHANAHDFDSHTSDLEDISRKIFSAHFGHLAVIFIWLSGAYFHGARFSNFSGWLADPTHVKPSAQVVWPIFGQEILNGDVGGGFHGIQITSGLFQLWRASGYTNEFQLYVTAIGALVMAGLMLFAGWFHYHKAAPKLEWFQNVESMLNHHLAGLLGLGSLSWAGHQIHVSLPVNKLLDAIDAGEPLVLNGKTIASAADIPLPHEFLDVSLISQLFPGFEAGVKAFFTLNWSAYADFLTFKGGLNPVTGGLWLTDTAHHHLAIAVLFIVAGHMYRTNWGIGHSLKEILEAHKGPFTGQGHKGLYEILTTSWHAQLSINLAILGSISIIVAHHMYAMPPYPYLATDYPTMLSLFTHHIWIGGFLIVGAGAHAAIFMVRDYDPAKNVDNLLDRVLRHRDAIISHLNWVCIWLGFHSFGLYIHNDTMRALGRPQDMFSDSAIQLQPIFAQWIQNIHALAPGNTAPNALASVSQVFGGDVVAVGGKVAAAPIVLGTADFMVHHIHAFTIHVTALILLKGVLYARSSRLVPDKANLGFRFPCDGPGRGGTCQVSGWDHVFLGLFWMYNSLSIVIFHYSWKMQSDVWGSVLPDGSVAHIANGNFAQSALTINGWLRDFLWAQASQVITSYGSSTSAYGLLFLGAHFVWAFSLMFLFSGRGYWQELIESIVWAHNKLKVAPAIQPRALSIIQGRAVGVAHYLLGGIVTTWSFFLARIIAVG</sequence>
<comment type="function">
    <text evidence="1">PsaA and PsaB bind P700, the primary electron donor of photosystem I (PSI), as well as the electron acceptors A0, A1 and FX. PSI is a plastocyanin/cytochrome c6-ferredoxin oxidoreductase, converting photonic excitation into a charge separation, which transfers an electron from the donor P700 chlorophyll pair to the spectroscopically characterized acceptors A0, A1, FX, FA and FB in turn. Oxidized P700 is reduced on the lumenal side of the thylakoid membrane by plastocyanin or cytochrome c6.</text>
</comment>
<comment type="catalytic activity">
    <reaction evidence="1">
        <text>reduced [plastocyanin] + hnu + oxidized [2Fe-2S]-[ferredoxin] = oxidized [plastocyanin] + reduced [2Fe-2S]-[ferredoxin]</text>
        <dbReference type="Rhea" id="RHEA:30407"/>
        <dbReference type="Rhea" id="RHEA-COMP:10000"/>
        <dbReference type="Rhea" id="RHEA-COMP:10001"/>
        <dbReference type="Rhea" id="RHEA-COMP:10039"/>
        <dbReference type="Rhea" id="RHEA-COMP:10040"/>
        <dbReference type="ChEBI" id="CHEBI:29036"/>
        <dbReference type="ChEBI" id="CHEBI:30212"/>
        <dbReference type="ChEBI" id="CHEBI:33737"/>
        <dbReference type="ChEBI" id="CHEBI:33738"/>
        <dbReference type="ChEBI" id="CHEBI:49552"/>
        <dbReference type="EC" id="1.97.1.12"/>
    </reaction>
</comment>
<comment type="cofactor">
    <text evidence="1">PSI electron transfer chain: 5 chlorophyll a, 1 chlorophyll a', 2 phylloquinones and 3 4Fe-4S clusters. PSI core antenna: 90 chlorophyll a, 22 carotenoids, 3 phospholipids and 1 galactolipid. P700 is a chlorophyll a/chlorophyll a' dimer, A0 is one or more chlorophyll a, A1 is one or both phylloquinones and FX is a shared 4Fe-4S iron-sulfur center.</text>
</comment>
<comment type="subunit">
    <text evidence="1">The PsaA/B heterodimer binds the P700 chlorophyll special pair and subsequent electron acceptors. PSI consists of a core antenna complex that captures photons, and an electron transfer chain that converts photonic excitation into a charge separation. The cyanobacterial PSI reaction center is composed of one copy each of PsaA,B,C,D,E,F,I,J,K,L,M and X, and forms trimeric complexes.</text>
</comment>
<comment type="subcellular location">
    <subcellularLocation>
        <location evidence="1">Cellular thylakoid membrane</location>
        <topology evidence="1">Multi-pass membrane protein</topology>
    </subcellularLocation>
</comment>
<comment type="similarity">
    <text evidence="1">Belongs to the PsaA/PsaB family.</text>
</comment>
<organism>
    <name type="scientific">Synechococcus elongatus (strain ATCC 33912 / PCC 7942 / FACHB-805)</name>
    <name type="common">Anacystis nidulans R2</name>
    <dbReference type="NCBI Taxonomy" id="1140"/>
    <lineage>
        <taxon>Bacteria</taxon>
        <taxon>Bacillati</taxon>
        <taxon>Cyanobacteriota</taxon>
        <taxon>Cyanophyceae</taxon>
        <taxon>Synechococcales</taxon>
        <taxon>Synechococcaceae</taxon>
        <taxon>Synechococcus</taxon>
    </lineage>
</organism>
<reference key="1">
    <citation type="submission" date="2005-08" db="EMBL/GenBank/DDBJ databases">
        <title>Complete sequence of chromosome 1 of Synechococcus elongatus PCC 7942.</title>
        <authorList>
            <consortium name="US DOE Joint Genome Institute"/>
            <person name="Copeland A."/>
            <person name="Lucas S."/>
            <person name="Lapidus A."/>
            <person name="Barry K."/>
            <person name="Detter J.C."/>
            <person name="Glavina T."/>
            <person name="Hammon N."/>
            <person name="Israni S."/>
            <person name="Pitluck S."/>
            <person name="Schmutz J."/>
            <person name="Larimer F."/>
            <person name="Land M."/>
            <person name="Kyrpides N."/>
            <person name="Lykidis A."/>
            <person name="Golden S."/>
            <person name="Richardson P."/>
        </authorList>
    </citation>
    <scope>NUCLEOTIDE SEQUENCE [LARGE SCALE GENOMIC DNA]</scope>
    <source>
        <strain>ATCC 33912 / PCC 7942 / FACHB-805</strain>
    </source>
</reference>
<accession>Q31LJ0</accession>
<name>PSAA_SYNE7</name>
<gene>
    <name evidence="1" type="primary">psaA</name>
    <name type="ordered locus">Synpcc7942_2049</name>
</gene>